<organism>
    <name type="scientific">Escherichia coli (strain K12 / DH10B)</name>
    <dbReference type="NCBI Taxonomy" id="316385"/>
    <lineage>
        <taxon>Bacteria</taxon>
        <taxon>Pseudomonadati</taxon>
        <taxon>Pseudomonadota</taxon>
        <taxon>Gammaproteobacteria</taxon>
        <taxon>Enterobacterales</taxon>
        <taxon>Enterobacteriaceae</taxon>
        <taxon>Escherichia</taxon>
    </lineage>
</organism>
<dbReference type="EMBL" id="CP000948">
    <property type="protein sequence ID" value="ACB02417.1"/>
    <property type="molecule type" value="Genomic_DNA"/>
</dbReference>
<dbReference type="RefSeq" id="WP_000366959.1">
    <property type="nucleotide sequence ID" value="NC_010473.1"/>
</dbReference>
<dbReference type="SMR" id="B1XAT8"/>
<dbReference type="KEGG" id="ecd:ECDH10B_1310"/>
<dbReference type="HOGENOM" id="CLU_143392_0_0_6"/>
<dbReference type="Gene3D" id="3.10.450.140">
    <property type="entry name" value="dsDNA mimic, putative"/>
    <property type="match status" value="1"/>
</dbReference>
<dbReference type="HAMAP" id="MF_00680">
    <property type="entry name" value="Put_dsDNA_mimic"/>
    <property type="match status" value="1"/>
</dbReference>
<dbReference type="InterPro" id="IPR007376">
    <property type="entry name" value="dsDNA_mimic_put"/>
</dbReference>
<dbReference type="InterPro" id="IPR036763">
    <property type="entry name" value="Put_dsDNA_mimic_sf"/>
</dbReference>
<dbReference type="NCBIfam" id="NF003469">
    <property type="entry name" value="PRK05094.1"/>
    <property type="match status" value="1"/>
</dbReference>
<dbReference type="Pfam" id="PF04269">
    <property type="entry name" value="DUF440"/>
    <property type="match status" value="1"/>
</dbReference>
<dbReference type="PIRSF" id="PIRSF004916">
    <property type="entry name" value="UCP004916"/>
    <property type="match status" value="1"/>
</dbReference>
<dbReference type="SUPFAM" id="SSF102816">
    <property type="entry name" value="Putative dsDNA mimic"/>
    <property type="match status" value="1"/>
</dbReference>
<sequence length="109" mass="12687">MDMDLNNRLTEDETLEQAYDIFLELAADNLDPADVLLFNLQFEERGGAELFDPAEDWQEHVDFDLNPDFFAEVVIGLADSEDGEINDVFARILLCREKDHKLCHIIWRE</sequence>
<name>YCIU_ECODH</name>
<reference key="1">
    <citation type="journal article" date="2008" name="J. Bacteriol.">
        <title>The complete genome sequence of Escherichia coli DH10B: insights into the biology of a laboratory workhorse.</title>
        <authorList>
            <person name="Durfee T."/>
            <person name="Nelson R."/>
            <person name="Baldwin S."/>
            <person name="Plunkett G. III"/>
            <person name="Burland V."/>
            <person name="Mau B."/>
            <person name="Petrosino J.F."/>
            <person name="Qin X."/>
            <person name="Muzny D.M."/>
            <person name="Ayele M."/>
            <person name="Gibbs R.A."/>
            <person name="Csorgo B."/>
            <person name="Posfai G."/>
            <person name="Weinstock G.M."/>
            <person name="Blattner F.R."/>
        </authorList>
    </citation>
    <scope>NUCLEOTIDE SEQUENCE [LARGE SCALE GENOMIC DNA]</scope>
    <source>
        <strain>K12 / DH10B</strain>
    </source>
</reference>
<feature type="chain" id="PRO_1000131704" description="Putative double-stranded DNA mimic protein YciU">
    <location>
        <begin position="1"/>
        <end position="109"/>
    </location>
</feature>
<protein>
    <recommendedName>
        <fullName evidence="1">Putative double-stranded DNA mimic protein YciU</fullName>
    </recommendedName>
</protein>
<accession>B1XAT8</accession>
<proteinExistence type="inferred from homology"/>
<comment type="function">
    <text evidence="1">May act as a double-stranded DNA (dsDNA) mimic. Probably regulates the activity of a dsDNA-binding protein.</text>
</comment>
<comment type="similarity">
    <text evidence="1">Belongs to the putative dsDNA mimic protein family.</text>
</comment>
<gene>
    <name evidence="1" type="primary">yciU</name>
    <name type="ordered locus">ECDH10B_1310</name>
</gene>
<evidence type="ECO:0000255" key="1">
    <source>
        <dbReference type="HAMAP-Rule" id="MF_00680"/>
    </source>
</evidence>